<proteinExistence type="evidence at protein level"/>
<organism>
    <name type="scientific">Artemia salina</name>
    <name type="common">Brine shrimp</name>
    <dbReference type="NCBI Taxonomy" id="85549"/>
    <lineage>
        <taxon>Eukaryota</taxon>
        <taxon>Metazoa</taxon>
        <taxon>Ecdysozoa</taxon>
        <taxon>Arthropoda</taxon>
        <taxon>Crustacea</taxon>
        <taxon>Branchiopoda</taxon>
        <taxon>Anostraca</taxon>
        <taxon>Artemiidae</taxon>
        <taxon>Artemia</taxon>
    </lineage>
</organism>
<protein>
    <recommendedName>
        <fullName>Elongation factor 1-alpha</fullName>
        <shortName>EF-1-alpha</shortName>
    </recommendedName>
</protein>
<reference key="1">
    <citation type="journal article" date="1984" name="EMBO J.">
        <title>The primary structure of elongation factor EF-1 alpha from the brine shrimp Artemia.</title>
        <authorList>
            <person name="van Hemert F.J."/>
            <person name="Amons R."/>
            <person name="Pluijms W.J.M."/>
            <person name="van Ormondt H."/>
            <person name="Moeller W."/>
        </authorList>
    </citation>
    <scope>NUCLEOTIDE SEQUENCE [MRNA]</scope>
    <scope>PROTEIN SEQUENCE OF 6-462</scope>
    <scope>METHYLATION AT LYS-36; LYS-55; LYS-79; LYS-219 AND LYS-318</scope>
    <scope>BLOCKAGE OF N-TERMINUS</scope>
</reference>
<reference key="2">
    <citation type="journal article" date="1986" name="Eur. J. Biochem.">
        <title>Genes coding for the elongation factor EF-1 alpha in Artemia.</title>
        <authorList>
            <person name="Lenstra J.A."/>
            <person name="van Vliet A."/>
            <person name="Arnberg A.C."/>
            <person name="van Hemert F.J."/>
            <person name="Moeller W."/>
        </authorList>
    </citation>
    <scope>NUCLEOTIDE SEQUENCE [GENOMIC DNA]</scope>
</reference>
<reference key="3">
    <citation type="journal article" date="1983" name="FEBS Lett.">
        <title>Sequence homology between EF-1 alpha, the alpha-chain of elongation factor 1 from Artemia salina and elongation factor EF-Tu from Escherichia coli.</title>
        <authorList>
            <person name="Amons R."/>
            <person name="Pluijms W."/>
            <person name="Roobol K."/>
            <person name="Moller W."/>
        </authorList>
    </citation>
    <scope>PROTEIN SEQUENCE OF 70-114; 135-154; 219-266 AND 277-398</scope>
    <scope>METHYLATION AT LYS-79; LYS-219 AND LYS-318</scope>
    <scope>ETHANOLAMINYLATION AT GLU-374</scope>
</reference>
<name>EF1A_ARTSA</name>
<evidence type="ECO:0000250" key="1"/>
<evidence type="ECO:0000269" key="2">
    <source>
    </source>
</evidence>
<evidence type="ECO:0000269" key="3">
    <source>
    </source>
</evidence>
<evidence type="ECO:0000305" key="4"/>
<evidence type="ECO:0000305" key="5">
    <source>
    </source>
</evidence>
<evidence type="ECO:0000305" key="6">
    <source>
    </source>
</evidence>
<sequence>MGKEKIHINIVVIGHVDSGKSTTTGHLIYKCGGIDKRTIEKFEKEAQEMGKGSFKYAWVLDKLKAERERGITIDIALWKFETAKYYVTIIDAPGHRDFIKNMITGTSQADCAVLIVAAGVGEFEAGISKNGQTREHALLAYTLGVKQLIVGVNKMDSTEPPFSEARFEEIKKEVSAYIKKIGYNPAAVAFVPISGWHGDNMLEASDRLPWYKGWNIERKEGKADGKTLLDALDAILPPSRPTEKPLRLPLQDVYKIGGIGTVPVGRVETGIIKPGMIVTFAPANITTEVKSVEMHHESLEQASPGDNVGFNVKNVSVKELRRGYVASDSKNNPARGSQDFFAQVIVLNHPGQISNGYTPVLDCHTAHIACKFAEIKEKCDRRTGKTTEAEPKFIKSGDAAMITLVPSKPLCVEAFSDFPPLGRFAVRDMRQTVAVGVIKSVNFKDPTAGKVTKAAEKAGKKK</sequence>
<keyword id="KW-0963">Cytoplasm</keyword>
<keyword id="KW-0903">Direct protein sequencing</keyword>
<keyword id="KW-0251">Elongation factor</keyword>
<keyword id="KW-0342">GTP-binding</keyword>
<keyword id="KW-0488">Methylation</keyword>
<keyword id="KW-0547">Nucleotide-binding</keyword>
<keyword id="KW-0597">Phosphoprotein</keyword>
<keyword id="KW-0648">Protein biosynthesis</keyword>
<accession>P02993</accession>
<comment type="function">
    <text>This protein promotes the GTP-dependent binding of aminoacyl-tRNA to the A-site of ribosomes during protein biosynthesis.</text>
</comment>
<comment type="subcellular location">
    <subcellularLocation>
        <location>Cytoplasm</location>
    </subcellularLocation>
</comment>
<comment type="PTM">
    <text>The N-terminus is blocked.</text>
</comment>
<comment type="similarity">
    <text evidence="4">Belongs to the TRAFAC class translation factor GTPase superfamily. Classic translation factor GTPase family. EF-Tu/EF-1A subfamily.</text>
</comment>
<feature type="initiator methionine" description="Removed">
    <location>
        <position position="1"/>
    </location>
</feature>
<feature type="chain" id="PRO_0000090917" description="Elongation factor 1-alpha">
    <location>
        <begin position="2"/>
        <end position="462"/>
    </location>
</feature>
<feature type="domain" description="tr-type G">
    <location>
        <begin position="5"/>
        <end position="242"/>
    </location>
</feature>
<feature type="region of interest" description="G1" evidence="1">
    <location>
        <begin position="14"/>
        <end position="21"/>
    </location>
</feature>
<feature type="region of interest" description="G2" evidence="1">
    <location>
        <begin position="70"/>
        <end position="74"/>
    </location>
</feature>
<feature type="region of interest" description="G3" evidence="1">
    <location>
        <begin position="91"/>
        <end position="94"/>
    </location>
</feature>
<feature type="region of interest" description="G4" evidence="1">
    <location>
        <begin position="153"/>
        <end position="156"/>
    </location>
</feature>
<feature type="region of interest" description="G5" evidence="1">
    <location>
        <begin position="194"/>
        <end position="196"/>
    </location>
</feature>
<feature type="binding site" evidence="1">
    <location>
        <begin position="14"/>
        <end position="21"/>
    </location>
    <ligand>
        <name>GTP</name>
        <dbReference type="ChEBI" id="CHEBI:37565"/>
    </ligand>
</feature>
<feature type="binding site" evidence="1">
    <location>
        <begin position="91"/>
        <end position="95"/>
    </location>
    <ligand>
        <name>GTP</name>
        <dbReference type="ChEBI" id="CHEBI:37565"/>
    </ligand>
</feature>
<feature type="binding site" evidence="1">
    <location>
        <begin position="153"/>
        <end position="156"/>
    </location>
    <ligand>
        <name>GTP</name>
        <dbReference type="ChEBI" id="CHEBI:37565"/>
    </ligand>
</feature>
<feature type="modified residue" description="Blocked amino end (Gly)">
    <location>
        <position position="2"/>
    </location>
</feature>
<feature type="modified residue" description="N6,N6,N6-trimethyllysine" evidence="2">
    <location>
        <position position="36"/>
    </location>
</feature>
<feature type="modified residue" description="N6-methyllysine" evidence="5">
    <location>
        <position position="55"/>
    </location>
</feature>
<feature type="modified residue" description="N6,N6,N6-trimethyllysine" evidence="2 3">
    <location>
        <position position="79"/>
    </location>
</feature>
<feature type="modified residue" description="N6,N6,N6-trimethyllysine" evidence="2 3">
    <location>
        <position position="219"/>
    </location>
</feature>
<feature type="modified residue" description="N6,N6,N6-trimethyllysine" evidence="2 3">
    <location>
        <position position="318"/>
    </location>
</feature>
<feature type="modified residue" description="5-glutamyl glycerylphosphorylethanolamine" evidence="6">
    <location>
        <position position="374"/>
    </location>
</feature>
<feature type="sequence conflict" description="In Ref. 1; AA sequence." evidence="4" ref="1">
    <original>G</original>
    <variation>S</variation>
    <location>
        <position position="33"/>
    </location>
</feature>
<feature type="sequence conflict" description="In Ref. 1; AA sequence." evidence="4" ref="1">
    <original>G</original>
    <variation>D</variation>
    <location>
        <position position="182"/>
    </location>
</feature>
<dbReference type="EMBL" id="X03349">
    <property type="protein sequence ID" value="CAA27055.1"/>
    <property type="molecule type" value="mRNA"/>
</dbReference>
<dbReference type="EMBL" id="X03704">
    <property type="protein sequence ID" value="CAA27334.1"/>
    <property type="molecule type" value="Genomic_DNA"/>
</dbReference>
<dbReference type="EMBL" id="X03705">
    <property type="protein sequence ID" value="CAA27334.1"/>
    <property type="status" value="JOINED"/>
    <property type="molecule type" value="Genomic_DNA"/>
</dbReference>
<dbReference type="EMBL" id="X03706">
    <property type="protein sequence ID" value="CAA27334.1"/>
    <property type="status" value="JOINED"/>
    <property type="molecule type" value="Genomic_DNA"/>
</dbReference>
<dbReference type="EMBL" id="X03707">
    <property type="protein sequence ID" value="CAA27334.1"/>
    <property type="status" value="JOINED"/>
    <property type="molecule type" value="Genomic_DNA"/>
</dbReference>
<dbReference type="EMBL" id="X03708">
    <property type="protein sequence ID" value="CAA27334.1"/>
    <property type="status" value="JOINED"/>
    <property type="molecule type" value="Genomic_DNA"/>
</dbReference>
<dbReference type="PIR" id="A25056">
    <property type="entry name" value="EFSS1A"/>
</dbReference>
<dbReference type="SMR" id="P02993"/>
<dbReference type="iPTMnet" id="P02993"/>
<dbReference type="GO" id="GO:0005737">
    <property type="term" value="C:cytoplasm"/>
    <property type="evidence" value="ECO:0007669"/>
    <property type="project" value="UniProtKB-SubCell"/>
</dbReference>
<dbReference type="GO" id="GO:0005525">
    <property type="term" value="F:GTP binding"/>
    <property type="evidence" value="ECO:0007669"/>
    <property type="project" value="UniProtKB-KW"/>
</dbReference>
<dbReference type="GO" id="GO:0003924">
    <property type="term" value="F:GTPase activity"/>
    <property type="evidence" value="ECO:0007669"/>
    <property type="project" value="InterPro"/>
</dbReference>
<dbReference type="GO" id="GO:0003746">
    <property type="term" value="F:translation elongation factor activity"/>
    <property type="evidence" value="ECO:0007669"/>
    <property type="project" value="UniProtKB-KW"/>
</dbReference>
<dbReference type="CDD" id="cd01883">
    <property type="entry name" value="EF1_alpha"/>
    <property type="match status" value="1"/>
</dbReference>
<dbReference type="CDD" id="cd03693">
    <property type="entry name" value="EF1_alpha_II"/>
    <property type="match status" value="1"/>
</dbReference>
<dbReference type="CDD" id="cd03705">
    <property type="entry name" value="EF1_alpha_III"/>
    <property type="match status" value="1"/>
</dbReference>
<dbReference type="FunFam" id="2.40.30.10:FF:000003">
    <property type="entry name" value="Elongation factor 1-alpha"/>
    <property type="match status" value="1"/>
</dbReference>
<dbReference type="FunFam" id="2.40.30.10:FF:000005">
    <property type="entry name" value="Elongation factor 1-alpha"/>
    <property type="match status" value="1"/>
</dbReference>
<dbReference type="FunFam" id="3.40.50.300:FF:000090">
    <property type="entry name" value="Elongation factor 1-alpha"/>
    <property type="match status" value="1"/>
</dbReference>
<dbReference type="Gene3D" id="3.40.50.300">
    <property type="entry name" value="P-loop containing nucleotide triphosphate hydrolases"/>
    <property type="match status" value="1"/>
</dbReference>
<dbReference type="Gene3D" id="2.40.30.10">
    <property type="entry name" value="Translation factors"/>
    <property type="match status" value="2"/>
</dbReference>
<dbReference type="HAMAP" id="MF_00118_A">
    <property type="entry name" value="EF_Tu_A"/>
    <property type="match status" value="1"/>
</dbReference>
<dbReference type="InterPro" id="IPR004161">
    <property type="entry name" value="EFTu-like_2"/>
</dbReference>
<dbReference type="InterPro" id="IPR031157">
    <property type="entry name" value="G_TR_CS"/>
</dbReference>
<dbReference type="InterPro" id="IPR054696">
    <property type="entry name" value="GTP-eEF1A_C"/>
</dbReference>
<dbReference type="InterPro" id="IPR027417">
    <property type="entry name" value="P-loop_NTPase"/>
</dbReference>
<dbReference type="InterPro" id="IPR000795">
    <property type="entry name" value="T_Tr_GTP-bd_dom"/>
</dbReference>
<dbReference type="InterPro" id="IPR050100">
    <property type="entry name" value="TRAFAC_GTPase_members"/>
</dbReference>
<dbReference type="InterPro" id="IPR009000">
    <property type="entry name" value="Transl_B-barrel_sf"/>
</dbReference>
<dbReference type="InterPro" id="IPR009001">
    <property type="entry name" value="Transl_elong_EF1A/Init_IF2_C"/>
</dbReference>
<dbReference type="InterPro" id="IPR004539">
    <property type="entry name" value="Transl_elong_EF1A_euk/arc"/>
</dbReference>
<dbReference type="NCBIfam" id="TIGR00483">
    <property type="entry name" value="EF-1_alpha"/>
    <property type="match status" value="1"/>
</dbReference>
<dbReference type="NCBIfam" id="NF008969">
    <property type="entry name" value="PRK12317.1"/>
    <property type="match status" value="1"/>
</dbReference>
<dbReference type="PANTHER" id="PTHR23115">
    <property type="entry name" value="TRANSLATION FACTOR"/>
    <property type="match status" value="1"/>
</dbReference>
<dbReference type="Pfam" id="PF22594">
    <property type="entry name" value="GTP-eEF1A_C"/>
    <property type="match status" value="1"/>
</dbReference>
<dbReference type="Pfam" id="PF00009">
    <property type="entry name" value="GTP_EFTU"/>
    <property type="match status" value="1"/>
</dbReference>
<dbReference type="Pfam" id="PF03144">
    <property type="entry name" value="GTP_EFTU_D2"/>
    <property type="match status" value="1"/>
</dbReference>
<dbReference type="PRINTS" id="PR00315">
    <property type="entry name" value="ELONGATNFCT"/>
</dbReference>
<dbReference type="SUPFAM" id="SSF50465">
    <property type="entry name" value="EF-Tu/eEF-1alpha/eIF2-gamma C-terminal domain"/>
    <property type="match status" value="1"/>
</dbReference>
<dbReference type="SUPFAM" id="SSF52540">
    <property type="entry name" value="P-loop containing nucleoside triphosphate hydrolases"/>
    <property type="match status" value="1"/>
</dbReference>
<dbReference type="SUPFAM" id="SSF50447">
    <property type="entry name" value="Translation proteins"/>
    <property type="match status" value="1"/>
</dbReference>
<dbReference type="PROSITE" id="PS00301">
    <property type="entry name" value="G_TR_1"/>
    <property type="match status" value="1"/>
</dbReference>
<dbReference type="PROSITE" id="PS51722">
    <property type="entry name" value="G_TR_2"/>
    <property type="match status" value="1"/>
</dbReference>